<feature type="chain" id="PRO_0000096180" description="DNA polymerase II small subunit">
    <location>
        <begin position="1"/>
        <end position="613"/>
    </location>
</feature>
<dbReference type="EC" id="2.7.7.7"/>
<dbReference type="EC" id="3.1.11.1"/>
<dbReference type="EMBL" id="D84670">
    <property type="protein sequence ID" value="BAA25163.1"/>
    <property type="molecule type" value="Genomic_DNA"/>
</dbReference>
<dbReference type="EMBL" id="AE009950">
    <property type="protein sequence ID" value="AAL80142.1"/>
    <property type="molecule type" value="Genomic_DNA"/>
</dbReference>
<dbReference type="PIR" id="T43933">
    <property type="entry name" value="T43933"/>
</dbReference>
<dbReference type="RefSeq" id="WP_011011130.1">
    <property type="nucleotide sequence ID" value="NZ_CP023154.1"/>
</dbReference>
<dbReference type="SMR" id="P81412"/>
<dbReference type="DIP" id="DIP-59599N"/>
<dbReference type="IntAct" id="P81412">
    <property type="interactions" value="1"/>
</dbReference>
<dbReference type="STRING" id="186497.PF0018"/>
<dbReference type="PaxDb" id="186497-PF0018"/>
<dbReference type="DNASU" id="1467846"/>
<dbReference type="KEGG" id="pfu:PF0018"/>
<dbReference type="PATRIC" id="fig|186497.12.peg.20"/>
<dbReference type="eggNOG" id="arCOG04455">
    <property type="taxonomic scope" value="Archaea"/>
</dbReference>
<dbReference type="HOGENOM" id="CLU_027850_1_0_2"/>
<dbReference type="OrthoDB" id="372039at2157"/>
<dbReference type="PhylomeDB" id="P81412"/>
<dbReference type="BRENDA" id="2.7.7.7">
    <property type="organism ID" value="5243"/>
</dbReference>
<dbReference type="Proteomes" id="UP000001013">
    <property type="component" value="Chromosome"/>
</dbReference>
<dbReference type="GO" id="GO:0042575">
    <property type="term" value="C:DNA polymerase complex"/>
    <property type="evidence" value="ECO:0007669"/>
    <property type="project" value="TreeGrafter"/>
</dbReference>
<dbReference type="GO" id="GO:0003677">
    <property type="term" value="F:DNA binding"/>
    <property type="evidence" value="ECO:0007669"/>
    <property type="project" value="UniProtKB-UniRule"/>
</dbReference>
<dbReference type="GO" id="GO:0003887">
    <property type="term" value="F:DNA-directed DNA polymerase activity"/>
    <property type="evidence" value="ECO:0007669"/>
    <property type="project" value="UniProtKB-UniRule"/>
</dbReference>
<dbReference type="GO" id="GO:0008310">
    <property type="term" value="F:single-stranded DNA 3'-5' DNA exonuclease activity"/>
    <property type="evidence" value="ECO:0007669"/>
    <property type="project" value="UniProtKB-EC"/>
</dbReference>
<dbReference type="GO" id="GO:0006308">
    <property type="term" value="P:DNA catabolic process"/>
    <property type="evidence" value="ECO:0007669"/>
    <property type="project" value="UniProtKB-UniRule"/>
</dbReference>
<dbReference type="GO" id="GO:0006271">
    <property type="term" value="P:DNA strand elongation involved in DNA replication"/>
    <property type="evidence" value="ECO:0007669"/>
    <property type="project" value="TreeGrafter"/>
</dbReference>
<dbReference type="CDD" id="cd07386">
    <property type="entry name" value="MPP_DNA_pol_II_small_archeal_C"/>
    <property type="match status" value="1"/>
</dbReference>
<dbReference type="FunFam" id="3.60.21.50:FF:000003">
    <property type="entry name" value="DNA polymerase II small subunit"/>
    <property type="match status" value="1"/>
</dbReference>
<dbReference type="Gene3D" id="3.60.21.50">
    <property type="match status" value="1"/>
</dbReference>
<dbReference type="Gene3D" id="1.10.8.800">
    <property type="entry name" value="D-family DNA polymerase, DP1 subunit N-terminal domain"/>
    <property type="match status" value="1"/>
</dbReference>
<dbReference type="Gene3D" id="2.40.50.140">
    <property type="entry name" value="Nucleic acid-binding proteins"/>
    <property type="match status" value="1"/>
</dbReference>
<dbReference type="HAMAP" id="MF_00325">
    <property type="entry name" value="DNApol_II_A_arch"/>
    <property type="match status" value="1"/>
</dbReference>
<dbReference type="InterPro" id="IPR004843">
    <property type="entry name" value="Calcineurin-like_PHP_ApaH"/>
</dbReference>
<dbReference type="InterPro" id="IPR024826">
    <property type="entry name" value="DNA_pol_delta/II_ssu"/>
</dbReference>
<dbReference type="InterPro" id="IPR029052">
    <property type="entry name" value="Metallo-depent_PP-like"/>
</dbReference>
<dbReference type="InterPro" id="IPR012340">
    <property type="entry name" value="NA-bd_OB-fold"/>
</dbReference>
<dbReference type="InterPro" id="IPR011149">
    <property type="entry name" value="Pol2_small_arc"/>
</dbReference>
<dbReference type="InterPro" id="IPR054750">
    <property type="entry name" value="PolB_N"/>
</dbReference>
<dbReference type="NCBIfam" id="NF003117">
    <property type="entry name" value="PRK04036.1-2"/>
    <property type="match status" value="1"/>
</dbReference>
<dbReference type="NCBIfam" id="NF003118">
    <property type="entry name" value="PRK04036.1-3"/>
    <property type="match status" value="1"/>
</dbReference>
<dbReference type="PANTHER" id="PTHR10416">
    <property type="entry name" value="DNA POLYMERASE DELTA SUBUNIT 2"/>
    <property type="match status" value="1"/>
</dbReference>
<dbReference type="PANTHER" id="PTHR10416:SF0">
    <property type="entry name" value="DNA POLYMERASE DELTA SUBUNIT 2"/>
    <property type="match status" value="1"/>
</dbReference>
<dbReference type="Pfam" id="PF00149">
    <property type="entry name" value="Metallophos"/>
    <property type="match status" value="1"/>
</dbReference>
<dbReference type="Pfam" id="PF22317">
    <property type="entry name" value="PolB_N"/>
    <property type="match status" value="1"/>
</dbReference>
<dbReference type="PIRSF" id="PIRSF000803">
    <property type="entry name" value="Arc_Pol2_small"/>
    <property type="match status" value="1"/>
</dbReference>
<dbReference type="SUPFAM" id="SSF56300">
    <property type="entry name" value="Metallo-dependent phosphatases"/>
    <property type="match status" value="1"/>
</dbReference>
<dbReference type="SUPFAM" id="SSF50249">
    <property type="entry name" value="Nucleic acid-binding proteins"/>
    <property type="match status" value="1"/>
</dbReference>
<accession>P81412</accession>
<gene>
    <name type="primary">polB</name>
    <name type="ordered locus">PF0018</name>
</gene>
<evidence type="ECO:0000305" key="1"/>
<comment type="function">
    <text>Possesses two activities: a DNA synthesis (polymerase) and an exonucleolytic activity that degrades single-stranded DNA in the 3' to 5' direction. Has a template-primer preference which is characteristic of a replicative DNA polymerase.</text>
</comment>
<comment type="catalytic activity">
    <reaction>
        <text>DNA(n) + a 2'-deoxyribonucleoside 5'-triphosphate = DNA(n+1) + diphosphate</text>
        <dbReference type="Rhea" id="RHEA:22508"/>
        <dbReference type="Rhea" id="RHEA-COMP:17339"/>
        <dbReference type="Rhea" id="RHEA-COMP:17340"/>
        <dbReference type="ChEBI" id="CHEBI:33019"/>
        <dbReference type="ChEBI" id="CHEBI:61560"/>
        <dbReference type="ChEBI" id="CHEBI:173112"/>
        <dbReference type="EC" id="2.7.7.7"/>
    </reaction>
</comment>
<comment type="catalytic activity">
    <reaction>
        <text>Exonucleolytic cleavage in the 3'- to 5'-direction to yield nucleoside 5'-phosphates.</text>
        <dbReference type="EC" id="3.1.11.1"/>
    </reaction>
</comment>
<comment type="subunit">
    <text>Heterodimer of a large subunit and a small subunit.</text>
</comment>
<comment type="interaction">
    <interactant intactId="EBI-15906191">
        <id>P81412</id>
    </interactant>
    <interactant intactId="EBI-15762053">
        <id>O73947</id>
        <label>pcn</label>
    </interactant>
    <organismsDiffer>false</organismsDiffer>
    <experiments>2</experiments>
</comment>
<comment type="similarity">
    <text evidence="1">Belongs to the DNA polymerase delta/II small subunit family.</text>
</comment>
<sequence>MDEFVKSLLKANYLITPSAYYLLREYYEKGEFSIVELVKFARSRESYIITDALATEFLKVKGLEPILPVETKGGFVSTGESQKEQSYEESFGTKEEISQEIKEGESFISTGSEPLEEELNSIGIEEIGANEELVSNGNDNGGEAIVFDKYGYPMVYAPEEIEVEEKEYSKYEDLTIPMNPDFNYVEIKEDYDVVFDVRNVKLKPPKVKNGNGKEGEIIVEAYASLFRSRLKKLRKILRENPELDNVVDIGKLKYVKEDETVTIIGLVNSKREVNKGLIFEIEDLTGKVKVFLPKDSEDYREAFKVLPDAVVAFKGVYSKRGILYANKFYLPDVPLYRRQKPPLEEKVYAILISDIHVGSKEFCENAFIKFLEWLNGNVETKEEEEIVSRVKYLIIAGDVVDGVGVYPGQYADLTIPDIFDQYEALANLLSHVPKHITMFIAPGNHDAARQAIPQPEFYKEYAKPIYKLKNAVIISNPAVIRLHGRDFLIAHGRGIEDVVGSVPGLTHHKPGLPMVELLKMRHVAPMFGGKVPIAPDPEDLLVIEEVPDVVHMGHVHVYDAVVYRGVQLVNSATWQAQTEFQKMVNIVPTPAKVPVVDIDTAKVVKVLDFSGWC</sequence>
<reference key="1">
    <citation type="journal article" date="1997" name="Genes Cells">
        <title>A novel DNA polymerase in the hyperthermophilic archaeon, Pyrococcus furiosus: gene cloning, expression, and characterization.</title>
        <authorList>
            <person name="Uemori T."/>
            <person name="Sato Y."/>
            <person name="Kato I."/>
            <person name="Doi H."/>
            <person name="Ishino Y."/>
        </authorList>
    </citation>
    <scope>NUCLEOTIDE SEQUENCE [GENOMIC DNA]</scope>
    <source>
        <strain>ATCC 43587 / DSM 3638 / JCM 8422 / Vc1</strain>
    </source>
</reference>
<reference key="2">
    <citation type="journal article" date="1999" name="Genetics">
        <title>Divergence of the hyperthermophilic archaea Pyrococcus furiosus and P. horikoshii inferred from complete genomic sequences.</title>
        <authorList>
            <person name="Maeder D.L."/>
            <person name="Weiss R.B."/>
            <person name="Dunn D.M."/>
            <person name="Cherry J.L."/>
            <person name="Gonzalez J.M."/>
            <person name="DiRuggiero J."/>
            <person name="Robb F.T."/>
        </authorList>
    </citation>
    <scope>NUCLEOTIDE SEQUENCE [LARGE SCALE GENOMIC DNA]</scope>
    <source>
        <strain>ATCC 43587 / DSM 3638 / JCM 8422 / Vc1</strain>
    </source>
</reference>
<protein>
    <recommendedName>
        <fullName>DNA polymerase II small subunit</fullName>
        <shortName>Pol II</shortName>
        <ecNumber>2.7.7.7</ecNumber>
    </recommendedName>
    <alternativeName>
        <fullName>DP1</fullName>
    </alternativeName>
    <alternativeName>
        <fullName>Exodeoxyribonuclease small subunit</fullName>
        <ecNumber>3.1.11.1</ecNumber>
    </alternativeName>
</protein>
<keyword id="KW-0235">DNA replication</keyword>
<keyword id="KW-0238">DNA-binding</keyword>
<keyword id="KW-0239">DNA-directed DNA polymerase</keyword>
<keyword id="KW-0269">Exonuclease</keyword>
<keyword id="KW-0378">Hydrolase</keyword>
<keyword id="KW-0511">Multifunctional enzyme</keyword>
<keyword id="KW-0540">Nuclease</keyword>
<keyword id="KW-0548">Nucleotidyltransferase</keyword>
<keyword id="KW-1185">Reference proteome</keyword>
<keyword id="KW-0808">Transferase</keyword>
<name>DP2S_PYRFU</name>
<organism>
    <name type="scientific">Pyrococcus furiosus (strain ATCC 43587 / DSM 3638 / JCM 8422 / Vc1)</name>
    <dbReference type="NCBI Taxonomy" id="186497"/>
    <lineage>
        <taxon>Archaea</taxon>
        <taxon>Methanobacteriati</taxon>
        <taxon>Methanobacteriota</taxon>
        <taxon>Thermococci</taxon>
        <taxon>Thermococcales</taxon>
        <taxon>Thermococcaceae</taxon>
        <taxon>Pyrococcus</taxon>
    </lineage>
</organism>
<proteinExistence type="evidence at protein level"/>